<organismHost>
    <name type="scientific">Camelus</name>
    <dbReference type="NCBI Taxonomy" id="9836"/>
</organismHost>
<comment type="function">
    <text evidence="1">Stimulates cellular proliferation (hyperplasia)and mobility around infected cells to promote rapid and efficient spread of infection.</text>
</comment>
<comment type="subcellular location">
    <subcellularLocation>
        <location evidence="1">Secreted</location>
    </subcellularLocation>
</comment>
<comment type="induction">
    <text evidence="1">Expressed in the early phase of the viral replicative cycle.</text>
</comment>
<comment type="similarity">
    <text evidence="4">Belongs to the orthopoxvirus OPG019 family.</text>
</comment>
<dbReference type="EMBL" id="AY009089">
    <property type="protein sequence ID" value="AAG37467.1"/>
    <property type="molecule type" value="Genomic_DNA"/>
</dbReference>
<dbReference type="Proteomes" id="UP000107153">
    <property type="component" value="Genome"/>
</dbReference>
<dbReference type="GO" id="GO:0005576">
    <property type="term" value="C:extracellular region"/>
    <property type="evidence" value="ECO:0007669"/>
    <property type="project" value="UniProtKB-SubCell"/>
</dbReference>
<dbReference type="GO" id="GO:0005154">
    <property type="term" value="F:epidermal growth factor receptor binding"/>
    <property type="evidence" value="ECO:0007669"/>
    <property type="project" value="InterPro"/>
</dbReference>
<dbReference type="GO" id="GO:0008083">
    <property type="term" value="F:growth factor activity"/>
    <property type="evidence" value="ECO:0007669"/>
    <property type="project" value="UniProtKB-KW"/>
</dbReference>
<dbReference type="GO" id="GO:0007173">
    <property type="term" value="P:epidermal growth factor receptor signaling pathway"/>
    <property type="evidence" value="ECO:0007669"/>
    <property type="project" value="TreeGrafter"/>
</dbReference>
<dbReference type="GO" id="GO:0008284">
    <property type="term" value="P:positive regulation of cell population proliferation"/>
    <property type="evidence" value="ECO:0007669"/>
    <property type="project" value="TreeGrafter"/>
</dbReference>
<dbReference type="GO" id="GO:0045840">
    <property type="term" value="P:positive regulation of mitotic nuclear division"/>
    <property type="evidence" value="ECO:0007669"/>
    <property type="project" value="TreeGrafter"/>
</dbReference>
<dbReference type="Gene3D" id="2.10.25.10">
    <property type="entry name" value="Laminin"/>
    <property type="match status" value="1"/>
</dbReference>
<dbReference type="InterPro" id="IPR000742">
    <property type="entry name" value="EGF-like_dom"/>
</dbReference>
<dbReference type="InterPro" id="IPR011170">
    <property type="entry name" value="GF_C11R"/>
</dbReference>
<dbReference type="PANTHER" id="PTHR10740:SF14">
    <property type="entry name" value="EGF-LIKE DOMAIN-CONTAINING PROTEIN"/>
    <property type="match status" value="1"/>
</dbReference>
<dbReference type="PANTHER" id="PTHR10740">
    <property type="entry name" value="TRANSFORMING GROWTH FACTOR ALPHA"/>
    <property type="match status" value="1"/>
</dbReference>
<dbReference type="PIRSF" id="PIRSF001779">
    <property type="entry name" value="GF_C11R"/>
    <property type="match status" value="1"/>
</dbReference>
<dbReference type="PRINTS" id="PR00009">
    <property type="entry name" value="EGFTGF"/>
</dbReference>
<dbReference type="SUPFAM" id="SSF57196">
    <property type="entry name" value="EGF/Laminin"/>
    <property type="match status" value="1"/>
</dbReference>
<dbReference type="PROSITE" id="PS00022">
    <property type="entry name" value="EGF_1"/>
    <property type="match status" value="1"/>
</dbReference>
<dbReference type="PROSITE" id="PS01186">
    <property type="entry name" value="EGF_2"/>
    <property type="match status" value="1"/>
</dbReference>
<dbReference type="PROSITE" id="PS50026">
    <property type="entry name" value="EGF_3"/>
    <property type="match status" value="1"/>
</dbReference>
<evidence type="ECO:0000250" key="1">
    <source>
        <dbReference type="UniProtKB" id="P01136"/>
    </source>
</evidence>
<evidence type="ECO:0000255" key="2"/>
<evidence type="ECO:0000255" key="3">
    <source>
        <dbReference type="PROSITE-ProRule" id="PRU00076"/>
    </source>
</evidence>
<evidence type="ECO:0000305" key="4"/>
<reference key="1">
    <citation type="journal article" date="2002" name="J. Gen. Virol.">
        <title>The sequence of camelpox virus shows it is most closely related to variola virus, the cause of smallpox.</title>
        <authorList>
            <person name="Gubser C."/>
            <person name="Smith G.L."/>
        </authorList>
    </citation>
    <scope>NUCLEOTIDE SEQUENCE [LARGE SCALE GENOMIC DNA]</scope>
</reference>
<organism>
    <name type="scientific">Camelpox virus (strain CMS)</name>
    <dbReference type="NCBI Taxonomy" id="203172"/>
    <lineage>
        <taxon>Viruses</taxon>
        <taxon>Varidnaviria</taxon>
        <taxon>Bamfordvirae</taxon>
        <taxon>Nucleocytoviricota</taxon>
        <taxon>Pokkesviricetes</taxon>
        <taxon>Chitovirales</taxon>
        <taxon>Poxviridae</taxon>
        <taxon>Chordopoxvirinae</taxon>
        <taxon>Orthopoxvirus</taxon>
        <taxon>Camelpox virus</taxon>
    </lineage>
</organism>
<name>VGF_CAMPS</name>
<proteinExistence type="inferred from homology"/>
<accession>Q776B5</accession>
<protein>
    <recommendedName>
        <fullName>Growth factor</fullName>
    </recommendedName>
    <alternativeName>
        <fullName>Secreted epidermal growth factor-like</fullName>
    </alternativeName>
</protein>
<feature type="signal peptide" evidence="2">
    <location>
        <begin position="1"/>
        <end position="19"/>
    </location>
</feature>
<feature type="chain" id="PRO_0000007602" description="Growth factor">
    <location>
        <begin position="20"/>
        <end position="139"/>
    </location>
</feature>
<feature type="domain" description="EGF-like" evidence="3">
    <location>
        <begin position="41"/>
        <end position="81"/>
    </location>
</feature>
<feature type="glycosylation site" description="N-linked (GlcNAc...) asparagine; by host" evidence="2">
    <location>
        <position position="34"/>
    </location>
</feature>
<feature type="glycosylation site" description="N-linked (GlcNAc...) asparagine; by host" evidence="2">
    <location>
        <position position="95"/>
    </location>
</feature>
<feature type="disulfide bond" evidence="3">
    <location>
        <begin position="45"/>
        <end position="58"/>
    </location>
</feature>
<feature type="disulfide bond" evidence="3">
    <location>
        <begin position="53"/>
        <end position="69"/>
    </location>
</feature>
<feature type="disulfide bond" evidence="3">
    <location>
        <begin position="71"/>
        <end position="80"/>
    </location>
</feature>
<keyword id="KW-1015">Disulfide bond</keyword>
<keyword id="KW-0244">Early protein</keyword>
<keyword id="KW-0245">EGF-like domain</keyword>
<keyword id="KW-0325">Glycoprotein</keyword>
<keyword id="KW-0339">Growth factor</keyword>
<keyword id="KW-1185">Reference proteome</keyword>
<keyword id="KW-0964">Secreted</keyword>
<keyword id="KW-0732">Signal</keyword>
<sequence>MSMKYLMLLFATMIIRSFADSGNAIETTSPEITNTTTDIPAIRLCGPEGDGYCLHGDCIHARDINGMYCRCSHGYTGIRCQHVVLVDYQRSEKPNTTTSYIPSPGIVLVLVGIIMCCLLSVYRFTRRTNKLPLQDMVVP</sequence>
<gene>
    <name type="primary">OPG019</name>
    <name type="ordered locus">CMP11R</name>
</gene>